<keyword id="KW-1185">Reference proteome</keyword>
<keyword id="KW-0687">Ribonucleoprotein</keyword>
<keyword id="KW-0689">Ribosomal protein</keyword>
<organism>
    <name type="scientific">Fusobacterium nucleatum subsp. nucleatum (strain ATCC 25586 / DSM 15643 / BCRC 10681 / CIP 101130 / JCM 8532 / KCTC 2640 / LMG 13131 / VPI 4355)</name>
    <dbReference type="NCBI Taxonomy" id="190304"/>
    <lineage>
        <taxon>Bacteria</taxon>
        <taxon>Fusobacteriati</taxon>
        <taxon>Fusobacteriota</taxon>
        <taxon>Fusobacteriia</taxon>
        <taxon>Fusobacteriales</taxon>
        <taxon>Fusobacteriaceae</taxon>
        <taxon>Fusobacterium</taxon>
    </lineage>
</organism>
<proteinExistence type="inferred from homology"/>
<name>RL7_FUSNN</name>
<dbReference type="EMBL" id="AE009951">
    <property type="protein sequence ID" value="AAL94122.1"/>
    <property type="molecule type" value="Genomic_DNA"/>
</dbReference>
<dbReference type="RefSeq" id="NP_602823.1">
    <property type="nucleotide sequence ID" value="NC_003454.1"/>
</dbReference>
<dbReference type="RefSeq" id="WP_005889295.1">
    <property type="nucleotide sequence ID" value="NZ_OZ209243.1"/>
</dbReference>
<dbReference type="SMR" id="Q8RHI5"/>
<dbReference type="FunCoup" id="Q8RHI5">
    <property type="interactions" value="397"/>
</dbReference>
<dbReference type="STRING" id="190304.FN2037"/>
<dbReference type="PaxDb" id="190304-FN2037"/>
<dbReference type="EnsemblBacteria" id="AAL94122">
    <property type="protein sequence ID" value="AAL94122"/>
    <property type="gene ID" value="FN2037"/>
</dbReference>
<dbReference type="GeneID" id="79799591"/>
<dbReference type="KEGG" id="fnu:FN2037"/>
<dbReference type="PATRIC" id="fig|190304.8.peg.500"/>
<dbReference type="eggNOG" id="COG0222">
    <property type="taxonomic scope" value="Bacteria"/>
</dbReference>
<dbReference type="HOGENOM" id="CLU_086499_3_0_0"/>
<dbReference type="InParanoid" id="Q8RHI5"/>
<dbReference type="BioCyc" id="FNUC190304:G1FZS-524-MONOMER"/>
<dbReference type="Proteomes" id="UP000002521">
    <property type="component" value="Chromosome"/>
</dbReference>
<dbReference type="GO" id="GO:0022625">
    <property type="term" value="C:cytosolic large ribosomal subunit"/>
    <property type="evidence" value="ECO:0000318"/>
    <property type="project" value="GO_Central"/>
</dbReference>
<dbReference type="GO" id="GO:0003729">
    <property type="term" value="F:mRNA binding"/>
    <property type="evidence" value="ECO:0000318"/>
    <property type="project" value="GO_Central"/>
</dbReference>
<dbReference type="GO" id="GO:0003735">
    <property type="term" value="F:structural constituent of ribosome"/>
    <property type="evidence" value="ECO:0000318"/>
    <property type="project" value="GO_Central"/>
</dbReference>
<dbReference type="GO" id="GO:0006412">
    <property type="term" value="P:translation"/>
    <property type="evidence" value="ECO:0000318"/>
    <property type="project" value="GO_Central"/>
</dbReference>
<dbReference type="CDD" id="cd00387">
    <property type="entry name" value="Ribosomal_L7_L12"/>
    <property type="match status" value="1"/>
</dbReference>
<dbReference type="FunFam" id="1.20.5.710:FF:000008">
    <property type="entry name" value="50S ribosomal protein L7/L12"/>
    <property type="match status" value="1"/>
</dbReference>
<dbReference type="FunFam" id="3.30.1390.10:FF:000001">
    <property type="entry name" value="50S ribosomal protein L7/L12"/>
    <property type="match status" value="1"/>
</dbReference>
<dbReference type="Gene3D" id="3.30.1390.10">
    <property type="match status" value="1"/>
</dbReference>
<dbReference type="Gene3D" id="1.20.5.710">
    <property type="entry name" value="Single helix bin"/>
    <property type="match status" value="1"/>
</dbReference>
<dbReference type="HAMAP" id="MF_00368">
    <property type="entry name" value="Ribosomal_bL12"/>
    <property type="match status" value="1"/>
</dbReference>
<dbReference type="InterPro" id="IPR000206">
    <property type="entry name" value="Ribosomal_bL12"/>
</dbReference>
<dbReference type="InterPro" id="IPR013823">
    <property type="entry name" value="Ribosomal_bL12_C"/>
</dbReference>
<dbReference type="InterPro" id="IPR014719">
    <property type="entry name" value="Ribosomal_bL12_C/ClpS-like"/>
</dbReference>
<dbReference type="InterPro" id="IPR008932">
    <property type="entry name" value="Ribosomal_bL12_oligo"/>
</dbReference>
<dbReference type="InterPro" id="IPR036235">
    <property type="entry name" value="Ribosomal_bL12_oligo_N_sf"/>
</dbReference>
<dbReference type="NCBIfam" id="TIGR00855">
    <property type="entry name" value="L12"/>
    <property type="match status" value="1"/>
</dbReference>
<dbReference type="PANTHER" id="PTHR45987">
    <property type="entry name" value="39S RIBOSOMAL PROTEIN L12"/>
    <property type="match status" value="1"/>
</dbReference>
<dbReference type="PANTHER" id="PTHR45987:SF4">
    <property type="entry name" value="LARGE RIBOSOMAL SUBUNIT PROTEIN BL12M"/>
    <property type="match status" value="1"/>
</dbReference>
<dbReference type="Pfam" id="PF00542">
    <property type="entry name" value="Ribosomal_L12"/>
    <property type="match status" value="1"/>
</dbReference>
<dbReference type="Pfam" id="PF16320">
    <property type="entry name" value="Ribosomal_L12_N"/>
    <property type="match status" value="1"/>
</dbReference>
<dbReference type="SUPFAM" id="SSF54736">
    <property type="entry name" value="ClpS-like"/>
    <property type="match status" value="1"/>
</dbReference>
<dbReference type="SUPFAM" id="SSF48300">
    <property type="entry name" value="Ribosomal protein L7/12, oligomerisation (N-terminal) domain"/>
    <property type="match status" value="1"/>
</dbReference>
<feature type="chain" id="PRO_0000157531" description="Large ribosomal subunit protein bL12">
    <location>
        <begin position="1"/>
        <end position="122"/>
    </location>
</feature>
<accession>Q8RHI5</accession>
<protein>
    <recommendedName>
        <fullName evidence="1">Large ribosomal subunit protein bL12</fullName>
    </recommendedName>
    <alternativeName>
        <fullName evidence="2">50S ribosomal protein L7/L12</fullName>
    </alternativeName>
</protein>
<evidence type="ECO:0000255" key="1">
    <source>
        <dbReference type="HAMAP-Rule" id="MF_00368"/>
    </source>
</evidence>
<evidence type="ECO:0000305" key="2"/>
<comment type="function">
    <text evidence="1">Forms part of the ribosomal stalk which helps the ribosome interact with GTP-bound translation factors. Is thus essential for accurate translation.</text>
</comment>
<comment type="subunit">
    <text evidence="1">Homodimer. Part of the ribosomal stalk of the 50S ribosomal subunit. Forms a multimeric L10(L12)X complex, where L10 forms an elongated spine to which 2 to 4 L12 dimers bind in a sequential fashion. Binds GTP-bound translation factors.</text>
</comment>
<comment type="similarity">
    <text evidence="1">Belongs to the bacterial ribosomal protein bL12 family.</text>
</comment>
<gene>
    <name evidence="1" type="primary">rplL</name>
    <name type="ordered locus">FN2037</name>
</gene>
<sequence>MAFNKEQFIADLEAMTVLELKELVSALEEHFGVTAAAPVAVAAAGGATEAAEEKTEFDVVLKSAGGNKIAVIKEVRAITGLGLKEAKDLVDNGGVIKEAAPKDEANAIKEKLTAAGAEVEVK</sequence>
<reference key="1">
    <citation type="journal article" date="2002" name="J. Bacteriol.">
        <title>Genome sequence and analysis of the oral bacterium Fusobacterium nucleatum strain ATCC 25586.</title>
        <authorList>
            <person name="Kapatral V."/>
            <person name="Anderson I."/>
            <person name="Ivanova N."/>
            <person name="Reznik G."/>
            <person name="Los T."/>
            <person name="Lykidis A."/>
            <person name="Bhattacharyya A."/>
            <person name="Bartman A."/>
            <person name="Gardner W."/>
            <person name="Grechkin G."/>
            <person name="Zhu L."/>
            <person name="Vasieva O."/>
            <person name="Chu L."/>
            <person name="Kogan Y."/>
            <person name="Chaga O."/>
            <person name="Goltsman E."/>
            <person name="Bernal A."/>
            <person name="Larsen N."/>
            <person name="D'Souza M."/>
            <person name="Walunas T."/>
            <person name="Pusch G."/>
            <person name="Haselkorn R."/>
            <person name="Fonstein M."/>
            <person name="Kyrpides N.C."/>
            <person name="Overbeek R."/>
        </authorList>
    </citation>
    <scope>NUCLEOTIDE SEQUENCE [LARGE SCALE GENOMIC DNA]</scope>
    <source>
        <strain>ATCC 25586 / DSM 15643 / BCRC 10681 / CIP 101130 / JCM 8532 / KCTC 2640 / LMG 13131 / VPI 4355</strain>
    </source>
</reference>